<sequence length="152" mass="16929">FNPCPYSDDTVKMIILTEQNKKQDFYTLDTIGEHNQFNKLTAKSQVVFIVWQTGIGDAITARAGYIFLLDSGLAMLVDKYQMAPVASDIKLCNAGCYCKPTYVISVKKAIQFAWEHKCVGIRCSDPGVPTDGLSGRPHYGETLHKVRSYNGK</sequence>
<dbReference type="EC" id="3.1.1.5"/>
<dbReference type="PIR" id="JN0426">
    <property type="entry name" value="JN0426"/>
</dbReference>
<dbReference type="SMR" id="Q7M3V4"/>
<dbReference type="GO" id="GO:0005576">
    <property type="term" value="C:extracellular region"/>
    <property type="evidence" value="ECO:0007669"/>
    <property type="project" value="UniProtKB-SubCell"/>
</dbReference>
<dbReference type="GO" id="GO:0044231">
    <property type="term" value="C:host cell presynaptic membrane"/>
    <property type="evidence" value="ECO:0007669"/>
    <property type="project" value="UniProtKB-KW"/>
</dbReference>
<dbReference type="GO" id="GO:0004622">
    <property type="term" value="F:lysophospholipase activity"/>
    <property type="evidence" value="ECO:0007669"/>
    <property type="project" value="UniProtKB-EC"/>
</dbReference>
<dbReference type="GO" id="GO:0090729">
    <property type="term" value="F:toxin activity"/>
    <property type="evidence" value="ECO:0007669"/>
    <property type="project" value="UniProtKB-KW"/>
</dbReference>
<dbReference type="GO" id="GO:0016042">
    <property type="term" value="P:lipid catabolic process"/>
    <property type="evidence" value="ECO:0007669"/>
    <property type="project" value="UniProtKB-KW"/>
</dbReference>
<reference key="1">
    <citation type="journal article" date="1989" name="Bioorg. Khim.">
        <title>Amino acid sequence of orientotoxin I and orientotoxin II from the hornet Vespa orientalis venom.</title>
        <authorList>
            <person name="Korneev A.S."/>
            <person name="Salikhov S.I."/>
            <person name="Tuychibaev M.U."/>
        </authorList>
    </citation>
    <scope>PROTEIN SEQUENCE</scope>
    <scope>FUNCTION</scope>
    <scope>SUBCELLULAR LOCATION</scope>
    <source>
        <tissue>Venom</tissue>
    </source>
</reference>
<protein>
    <recommendedName>
        <fullName evidence="3">Orientotoxin-1</fullName>
        <ecNumber>3.1.1.5</ecNumber>
    </recommendedName>
    <alternativeName>
        <fullName>Lysophospholipase</fullName>
    </alternativeName>
    <alternativeName>
        <fullName evidence="2">Orientotoxin I</fullName>
    </alternativeName>
</protein>
<keyword id="KW-0903">Direct protein sequencing</keyword>
<keyword id="KW-0378">Hydrolase</keyword>
<keyword id="KW-0442">Lipid degradation</keyword>
<keyword id="KW-0443">Lipid metabolism</keyword>
<keyword id="KW-0528">Neurotoxin</keyword>
<keyword id="KW-0638">Presynaptic neurotoxin</keyword>
<keyword id="KW-0964">Secreted</keyword>
<keyword id="KW-0800">Toxin</keyword>
<evidence type="ECO:0000269" key="1">
    <source>
    </source>
</evidence>
<evidence type="ECO:0000303" key="2">
    <source>
    </source>
</evidence>
<evidence type="ECO:0000305" key="3"/>
<evidence type="ECO:0000305" key="4">
    <source>
    </source>
</evidence>
<feature type="chain" id="PRO_0000058226" description="Orientotoxin-1" evidence="1">
    <location>
        <begin position="1"/>
        <end position="152"/>
    </location>
</feature>
<proteinExistence type="evidence at protein level"/>
<comment type="function">
    <text evidence="1">Neurotoxin of presynaptic effect which degrades lysophospholipids.</text>
</comment>
<comment type="catalytic activity">
    <reaction evidence="1">
        <text>a 1-acyl-sn-glycero-3-phosphocholine + H2O = sn-glycerol 3-phosphocholine + a fatty acid + H(+)</text>
        <dbReference type="Rhea" id="RHEA:15177"/>
        <dbReference type="ChEBI" id="CHEBI:15377"/>
        <dbReference type="ChEBI" id="CHEBI:15378"/>
        <dbReference type="ChEBI" id="CHEBI:16870"/>
        <dbReference type="ChEBI" id="CHEBI:28868"/>
        <dbReference type="ChEBI" id="CHEBI:58168"/>
        <dbReference type="EC" id="3.1.1.5"/>
    </reaction>
</comment>
<comment type="subcellular location">
    <subcellularLocation>
        <location evidence="1">Secreted</location>
    </subcellularLocation>
</comment>
<comment type="tissue specificity">
    <text evidence="4">Expressed by the venom gland.</text>
</comment>
<name>PAO1_VESOR</name>
<accession>Q7M3V4</accession>
<organism>
    <name type="scientific">Vespa orientalis</name>
    <name type="common">Oriental hornet</name>
    <dbReference type="NCBI Taxonomy" id="7447"/>
    <lineage>
        <taxon>Eukaryota</taxon>
        <taxon>Metazoa</taxon>
        <taxon>Ecdysozoa</taxon>
        <taxon>Arthropoda</taxon>
        <taxon>Hexapoda</taxon>
        <taxon>Insecta</taxon>
        <taxon>Pterygota</taxon>
        <taxon>Neoptera</taxon>
        <taxon>Endopterygota</taxon>
        <taxon>Hymenoptera</taxon>
        <taxon>Apocrita</taxon>
        <taxon>Aculeata</taxon>
        <taxon>Vespoidea</taxon>
        <taxon>Vespidae</taxon>
        <taxon>Vespinae</taxon>
        <taxon>Vespa</taxon>
    </lineage>
</organism>